<feature type="chain" id="PRO_0000237026" description="Small ribosomal subunit protein uS10">
    <location>
        <begin position="1"/>
        <end position="103"/>
    </location>
</feature>
<protein>
    <recommendedName>
        <fullName evidence="1">Small ribosomal subunit protein uS10</fullName>
    </recommendedName>
    <alternativeName>
        <fullName evidence="2">30S ribosomal protein S10</fullName>
    </alternativeName>
</protein>
<reference key="1">
    <citation type="submission" date="2005-10" db="EMBL/GenBank/DDBJ databases">
        <title>Complete sequence of chromosome 1 of Burkholderia sp. 383.</title>
        <authorList>
            <consortium name="US DOE Joint Genome Institute"/>
            <person name="Copeland A."/>
            <person name="Lucas S."/>
            <person name="Lapidus A."/>
            <person name="Barry K."/>
            <person name="Detter J.C."/>
            <person name="Glavina T."/>
            <person name="Hammon N."/>
            <person name="Israni S."/>
            <person name="Pitluck S."/>
            <person name="Chain P."/>
            <person name="Malfatti S."/>
            <person name="Shin M."/>
            <person name="Vergez L."/>
            <person name="Schmutz J."/>
            <person name="Larimer F."/>
            <person name="Land M."/>
            <person name="Kyrpides N."/>
            <person name="Lykidis A."/>
            <person name="Richardson P."/>
        </authorList>
    </citation>
    <scope>NUCLEOTIDE SEQUENCE [LARGE SCALE GENOMIC DNA]</scope>
    <source>
        <strain>ATCC 17760 / DSM 23089 / LMG 22485 / NCIMB 9086 / R18194 / 383</strain>
    </source>
</reference>
<proteinExistence type="inferred from homology"/>
<dbReference type="EMBL" id="CP000151">
    <property type="protein sequence ID" value="ABB07048.1"/>
    <property type="molecule type" value="Genomic_DNA"/>
</dbReference>
<dbReference type="RefSeq" id="WP_004199280.1">
    <property type="nucleotide sequence ID" value="NZ_LDWP01000062.1"/>
</dbReference>
<dbReference type="SMR" id="Q39KG8"/>
<dbReference type="GeneID" id="98107161"/>
<dbReference type="KEGG" id="bur:Bcep18194_A3446"/>
<dbReference type="HOGENOM" id="CLU_122625_1_3_4"/>
<dbReference type="Proteomes" id="UP000002705">
    <property type="component" value="Chromosome 1"/>
</dbReference>
<dbReference type="GO" id="GO:1990904">
    <property type="term" value="C:ribonucleoprotein complex"/>
    <property type="evidence" value="ECO:0007669"/>
    <property type="project" value="UniProtKB-KW"/>
</dbReference>
<dbReference type="GO" id="GO:0005840">
    <property type="term" value="C:ribosome"/>
    <property type="evidence" value="ECO:0007669"/>
    <property type="project" value="UniProtKB-KW"/>
</dbReference>
<dbReference type="GO" id="GO:0003735">
    <property type="term" value="F:structural constituent of ribosome"/>
    <property type="evidence" value="ECO:0007669"/>
    <property type="project" value="InterPro"/>
</dbReference>
<dbReference type="GO" id="GO:0000049">
    <property type="term" value="F:tRNA binding"/>
    <property type="evidence" value="ECO:0007669"/>
    <property type="project" value="UniProtKB-UniRule"/>
</dbReference>
<dbReference type="GO" id="GO:0006412">
    <property type="term" value="P:translation"/>
    <property type="evidence" value="ECO:0007669"/>
    <property type="project" value="UniProtKB-UniRule"/>
</dbReference>
<dbReference type="FunFam" id="3.30.70.600:FF:000001">
    <property type="entry name" value="30S ribosomal protein S10"/>
    <property type="match status" value="1"/>
</dbReference>
<dbReference type="Gene3D" id="3.30.70.600">
    <property type="entry name" value="Ribosomal protein S10 domain"/>
    <property type="match status" value="1"/>
</dbReference>
<dbReference type="HAMAP" id="MF_00508">
    <property type="entry name" value="Ribosomal_uS10"/>
    <property type="match status" value="1"/>
</dbReference>
<dbReference type="InterPro" id="IPR001848">
    <property type="entry name" value="Ribosomal_uS10"/>
</dbReference>
<dbReference type="InterPro" id="IPR018268">
    <property type="entry name" value="Ribosomal_uS10_CS"/>
</dbReference>
<dbReference type="InterPro" id="IPR027486">
    <property type="entry name" value="Ribosomal_uS10_dom"/>
</dbReference>
<dbReference type="InterPro" id="IPR036838">
    <property type="entry name" value="Ribosomal_uS10_dom_sf"/>
</dbReference>
<dbReference type="NCBIfam" id="NF001861">
    <property type="entry name" value="PRK00596.1"/>
    <property type="match status" value="1"/>
</dbReference>
<dbReference type="NCBIfam" id="TIGR01049">
    <property type="entry name" value="rpsJ_bact"/>
    <property type="match status" value="1"/>
</dbReference>
<dbReference type="PANTHER" id="PTHR11700">
    <property type="entry name" value="30S RIBOSOMAL PROTEIN S10 FAMILY MEMBER"/>
    <property type="match status" value="1"/>
</dbReference>
<dbReference type="Pfam" id="PF00338">
    <property type="entry name" value="Ribosomal_S10"/>
    <property type="match status" value="1"/>
</dbReference>
<dbReference type="PRINTS" id="PR00971">
    <property type="entry name" value="RIBOSOMALS10"/>
</dbReference>
<dbReference type="SMART" id="SM01403">
    <property type="entry name" value="Ribosomal_S10"/>
    <property type="match status" value="1"/>
</dbReference>
<dbReference type="SUPFAM" id="SSF54999">
    <property type="entry name" value="Ribosomal protein S10"/>
    <property type="match status" value="1"/>
</dbReference>
<dbReference type="PROSITE" id="PS00361">
    <property type="entry name" value="RIBOSOMAL_S10"/>
    <property type="match status" value="1"/>
</dbReference>
<comment type="function">
    <text evidence="1">Involved in the binding of tRNA to the ribosomes.</text>
</comment>
<comment type="subunit">
    <text evidence="1">Part of the 30S ribosomal subunit.</text>
</comment>
<comment type="similarity">
    <text evidence="1">Belongs to the universal ribosomal protein uS10 family.</text>
</comment>
<sequence length="103" mass="11828">MQQQKIRIRLKAFDYRLIDQSAAEIVDTAKRTGAIVRGPVPLPTRIQRFDILRSPHVNKTSRDQLEIRTHQRLMDIVDPTDKTVDALMKLDLPAGVDVEIKLQ</sequence>
<accession>Q39KG8</accession>
<name>RS10_BURL3</name>
<evidence type="ECO:0000255" key="1">
    <source>
        <dbReference type="HAMAP-Rule" id="MF_00508"/>
    </source>
</evidence>
<evidence type="ECO:0000305" key="2"/>
<organism>
    <name type="scientific">Burkholderia lata (strain ATCC 17760 / DSM 23089 / LMG 22485 / NCIMB 9086 / R18194 / 383)</name>
    <dbReference type="NCBI Taxonomy" id="482957"/>
    <lineage>
        <taxon>Bacteria</taxon>
        <taxon>Pseudomonadati</taxon>
        <taxon>Pseudomonadota</taxon>
        <taxon>Betaproteobacteria</taxon>
        <taxon>Burkholderiales</taxon>
        <taxon>Burkholderiaceae</taxon>
        <taxon>Burkholderia</taxon>
        <taxon>Burkholderia cepacia complex</taxon>
    </lineage>
</organism>
<gene>
    <name evidence="1" type="primary">rpsJ</name>
    <name type="ordered locus">Bcep18194_A3446</name>
</gene>
<keyword id="KW-0687">Ribonucleoprotein</keyword>
<keyword id="KW-0689">Ribosomal protein</keyword>